<feature type="chain" id="PRO_0000048605" description="FACT complex subunit SSRP1">
    <location>
        <begin position="1"/>
        <end position="706"/>
    </location>
</feature>
<feature type="DNA-binding region" description="HMG box" evidence="3">
    <location>
        <begin position="545"/>
        <end position="613"/>
    </location>
</feature>
<feature type="region of interest" description="Disordered" evidence="4">
    <location>
        <begin position="458"/>
        <end position="551"/>
    </location>
</feature>
<feature type="region of interest" description="Disordered" evidence="4">
    <location>
        <begin position="587"/>
        <end position="706"/>
    </location>
</feature>
<feature type="compositionally biased region" description="Acidic residues" evidence="4">
    <location>
        <begin position="474"/>
        <end position="496"/>
    </location>
</feature>
<feature type="compositionally biased region" description="Low complexity" evidence="4">
    <location>
        <begin position="497"/>
        <end position="507"/>
    </location>
</feature>
<feature type="compositionally biased region" description="Basic residues" evidence="4">
    <location>
        <begin position="517"/>
        <end position="531"/>
    </location>
</feature>
<feature type="compositionally biased region" description="Basic and acidic residues" evidence="4">
    <location>
        <begin position="532"/>
        <end position="544"/>
    </location>
</feature>
<feature type="compositionally biased region" description="Basic and acidic residues" evidence="4">
    <location>
        <begin position="587"/>
        <end position="610"/>
    </location>
</feature>
<feature type="compositionally biased region" description="Basic and acidic residues" evidence="4">
    <location>
        <begin position="634"/>
        <end position="645"/>
    </location>
</feature>
<feature type="compositionally biased region" description="Low complexity" evidence="4">
    <location>
        <begin position="647"/>
        <end position="664"/>
    </location>
</feature>
<feature type="compositionally biased region" description="Polar residues" evidence="4">
    <location>
        <begin position="693"/>
        <end position="706"/>
    </location>
</feature>
<feature type="sequence conflict" description="In Ref. 2; AAA48685." evidence="5" ref="2">
    <original>KV</original>
    <variation>IP</variation>
    <location>
        <begin position="39"/>
        <end position="40"/>
    </location>
</feature>
<feature type="sequence conflict" description="In Ref. 3; BAA03261." evidence="5" ref="3">
    <original>GKLF</original>
    <variation>TATV</variation>
    <location>
        <begin position="412"/>
        <end position="415"/>
    </location>
</feature>
<feature type="sequence conflict" description="In Ref. 2; AAA48685." evidence="5" ref="2">
    <original>A</original>
    <variation>S</variation>
    <location>
        <position position="501"/>
    </location>
</feature>
<feature type="sequence conflict" description="In Ref. 2; AAA48685." evidence="5" ref="2">
    <original>PAKKA</original>
    <variation>SSQEGP</variation>
    <location>
        <begin position="517"/>
        <end position="521"/>
    </location>
</feature>
<feature type="sequence conflict" description="In Ref. 2; AAA48685." evidence="5" ref="2">
    <original>A</original>
    <variation>V</variation>
    <location>
        <position position="544"/>
    </location>
</feature>
<feature type="sequence conflict" description="In Ref. 2; AAA48685." evidence="5" ref="2">
    <original>AA</original>
    <variation>SP</variation>
    <location>
        <begin position="646"/>
        <end position="647"/>
    </location>
</feature>
<feature type="sequence conflict" description="In Ref. 3; BAA03261." evidence="5" ref="3">
    <original>K</original>
    <variation>N</variation>
    <location>
        <position position="682"/>
    </location>
</feature>
<feature type="sequence conflict" description="In Ref. 3; BAA03261." evidence="5" ref="3">
    <original>DSEDESGASPAQSSEDSA</original>
    <variation>QEEEHRGANRPKPHKSPQQAP</variation>
    <location>
        <begin position="685"/>
        <end position="702"/>
    </location>
</feature>
<feature type="sequence conflict" description="In Ref. 2; AAA48685." evidence="5" ref="2">
    <original>S</original>
    <variation>R</variation>
    <location>
        <position position="690"/>
    </location>
</feature>
<keyword id="KW-0158">Chromosome</keyword>
<keyword id="KW-0227">DNA damage</keyword>
<keyword id="KW-0234">DNA repair</keyword>
<keyword id="KW-0235">DNA replication</keyword>
<keyword id="KW-0238">DNA-binding</keyword>
<keyword id="KW-0539">Nucleus</keyword>
<keyword id="KW-1185">Reference proteome</keyword>
<keyword id="KW-0804">Transcription</keyword>
<keyword id="KW-0805">Transcription regulation</keyword>
<name>SSRP1_CHICK</name>
<gene>
    <name type="primary">SSRP1</name>
    <name type="synonym">CIIDBP</name>
    <name type="ORF">RCJMB04_4n20</name>
</gene>
<reference key="1">
    <citation type="journal article" date="2005" name="Genome Biol.">
        <title>Full-length cDNAs from chicken bursal lymphocytes to facilitate gene function analysis.</title>
        <authorList>
            <person name="Caldwell R.B."/>
            <person name="Kierzek A.M."/>
            <person name="Arakawa H."/>
            <person name="Bezzubov Y."/>
            <person name="Zaim J."/>
            <person name="Fiedler P."/>
            <person name="Kutter S."/>
            <person name="Blagodatski A."/>
            <person name="Kostovska D."/>
            <person name="Koter M."/>
            <person name="Plachy J."/>
            <person name="Carninci P."/>
            <person name="Hayashizaki Y."/>
            <person name="Buerstedde J.-M."/>
        </authorList>
    </citation>
    <scope>NUCLEOTIDE SEQUENCE [LARGE SCALE MRNA]</scope>
    <source>
        <strain>CB</strain>
        <tissue>Bursa of Fabricius</tissue>
    </source>
</reference>
<reference key="2">
    <citation type="journal article" date="1993" name="Nucleic Acids Res.">
        <title>Rat and chick cDNA clones encoding HMG-like proteins.</title>
        <authorList>
            <person name="Wang L."/>
            <person name="Precht P."/>
            <person name="Balakir R."/>
            <person name="Horton W.E. Jr."/>
        </authorList>
    </citation>
    <scope>NUCLEOTIDE SEQUENCE [MRNA] OF 39-706</scope>
</reference>
<reference key="3">
    <citation type="journal article" date="1993" name="Development">
        <title>Delta-crystallin enhancer binding protein delta EF1 is a zinc finger-homeodomain protein implicated in postgastrulation embryogenesis.</title>
        <authorList>
            <person name="Funahashi J."/>
            <person name="Sekido R."/>
            <person name="Murai K."/>
            <person name="Kamachi Y."/>
            <person name="Kondoh H."/>
        </authorList>
    </citation>
    <scope>NUCLEOTIDE SEQUENCE [MRNA] OF 412-706</scope>
    <source>
        <tissue>Lens</tissue>
    </source>
</reference>
<comment type="function">
    <text evidence="1">Component of the FACT complex, a general chromatin factor that acts to reorganize nucleosomes. The FACT complex is involved in multiple processes that require DNA as a template such as mRNA elongation, DNA replication and DNA repair. During transcription elongation the FACT complex acts as a histone chaperone that both destabilizes and restores nucleosomal structure. It facilitates the passage of RNA polymerase II and transcription by promoting the dissociation of one histone H2A-H2B dimer from the nucleosome, then subsequently promotes the reestablishment of the nucleosome following the passage of RNA polymerase II. Binds specifically to double-stranded DNA (By similarity).</text>
</comment>
<comment type="subunit">
    <text evidence="1">Component of the FACT complex, a stable heterodimer of SSRP1 and SUPT16H. Also a component of a CK2-SPT16-SSRP1 complex which forms following UV irradiation, composed of SSRP1, SUPT16H, CSNK2A1, CSNK2A2 and CSNK2B (By similarity).</text>
</comment>
<comment type="subcellular location">
    <subcellularLocation>
        <location evidence="2">Nucleus</location>
    </subcellularLocation>
    <subcellularLocation>
        <location evidence="2">Chromosome</location>
    </subcellularLocation>
    <subcellularLocation>
        <location evidence="2">Nucleus</location>
        <location evidence="2">Nucleolus</location>
    </subcellularLocation>
    <text evidence="2">Colocalizes with RNA polymerase II on chromatin. Recruited to actively transcribed loci.</text>
</comment>
<comment type="similarity">
    <text evidence="5">Belongs to the SSRP1 family.</text>
</comment>
<proteinExistence type="evidence at transcript level"/>
<organism>
    <name type="scientific">Gallus gallus</name>
    <name type="common">Chicken</name>
    <dbReference type="NCBI Taxonomy" id="9031"/>
    <lineage>
        <taxon>Eukaryota</taxon>
        <taxon>Metazoa</taxon>
        <taxon>Chordata</taxon>
        <taxon>Craniata</taxon>
        <taxon>Vertebrata</taxon>
        <taxon>Euteleostomi</taxon>
        <taxon>Archelosauria</taxon>
        <taxon>Archosauria</taxon>
        <taxon>Dinosauria</taxon>
        <taxon>Saurischia</taxon>
        <taxon>Theropoda</taxon>
        <taxon>Coelurosauria</taxon>
        <taxon>Aves</taxon>
        <taxon>Neognathae</taxon>
        <taxon>Galloanserae</taxon>
        <taxon>Galliformes</taxon>
        <taxon>Phasianidae</taxon>
        <taxon>Phasianinae</taxon>
        <taxon>Gallus</taxon>
    </lineage>
</organism>
<evidence type="ECO:0000250" key="1"/>
<evidence type="ECO:0000250" key="2">
    <source>
        <dbReference type="UniProtKB" id="Q05344"/>
    </source>
</evidence>
<evidence type="ECO:0000255" key="3">
    <source>
        <dbReference type="PROSITE-ProRule" id="PRU00267"/>
    </source>
</evidence>
<evidence type="ECO:0000256" key="4">
    <source>
        <dbReference type="SAM" id="MobiDB-lite"/>
    </source>
</evidence>
<evidence type="ECO:0000305" key="5"/>
<accession>Q04678</accession>
<accession>Q08780</accession>
<accession>Q5ZLU3</accession>
<sequence length="706" mass="80026">MADTLEFNEIYQEVKGSMNDGRLRLSRQGVIFKNSKTGKVDNIQASELAEGVWRRVALGHGLKLLTKNGHVYKYDGFRESEFDKLSDFFKAHYRLELAEKDLCVKGWNWGTVRFGGQLLSFDIGEQPVFEIPLSNVSQCTTGKNEVTLEFHQNDDAEVSLMEVRFYVPPTQEDGVDPVEAFAQNVLSKADVIQATGDAICIFRELQCLTPRGRYDIRIYPTFLHLHGKTFDYKIPYTTVLRLFLLPHKDQRQMFFVISLDPPIKQGQTRYHFLILLFSKDEDISLTLNMNEEEVEKRFEGRLTKNMSGSLYEMVSRVMKALVNRKITVPGNFQGHSGAQCITCSYKASSGLLYPLERGFIYVHKPPVHIRFDEISFVNFARGTTTTRSFDFEIETKQGTQYTFSSIEREEYGKLFDFVNAKKLNIKNRGLKEGMKQSYDEYADSDEDQHDAYLERMKEEGKIREENANDSSDGSGEETDESFNPGEEDDDVAEEFDSNASASSSSGDGDSDRGEKKPAKKAKIVKDRKPRKKQVESKKGKDPNAPKRPMSAYMLWLNANREKIKSDHPGISITDLSKKAGELWKAMSKEKKEEWDRKAEDAKRDYEKAMKEYSVGNKSESSKMERSKKKKKKQEKQMKGKGEKKGAASKSSSSTKSSAKTMSESFKSKEFVSSDESSSAESKKEDSEDESGASPAQSSEDSASGSD</sequence>
<protein>
    <recommendedName>
        <fullName>FACT complex subunit SSRP1</fullName>
    </recommendedName>
    <alternativeName>
        <fullName>Facilitates chromatin transcription complex subunit SSRP1</fullName>
    </alternativeName>
    <alternativeName>
        <fullName>Recombination signal sequence recognition protein 1</fullName>
    </alternativeName>
    <alternativeName>
        <fullName>Structure-specific recognition protein 1</fullName>
    </alternativeName>
    <alternativeName>
        <fullName>T160</fullName>
    </alternativeName>
</protein>
<dbReference type="EMBL" id="AJ719641">
    <property type="protein sequence ID" value="CAG31300.1"/>
    <property type="molecule type" value="mRNA"/>
</dbReference>
<dbReference type="EMBL" id="L08815">
    <property type="protein sequence ID" value="AAA48685.1"/>
    <property type="molecule type" value="mRNA"/>
</dbReference>
<dbReference type="EMBL" id="D14315">
    <property type="protein sequence ID" value="BAA03261.1"/>
    <property type="molecule type" value="mRNA"/>
</dbReference>
<dbReference type="PIR" id="S78050">
    <property type="entry name" value="S78050"/>
</dbReference>
<dbReference type="RefSeq" id="NP_001005796.1">
    <property type="nucleotide sequence ID" value="NM_001005796.2"/>
</dbReference>
<dbReference type="SMR" id="Q04678"/>
<dbReference type="BioGRID" id="676756">
    <property type="interactions" value="1"/>
</dbReference>
<dbReference type="FunCoup" id="Q04678">
    <property type="interactions" value="2875"/>
</dbReference>
<dbReference type="STRING" id="9031.ENSGALP00000072835"/>
<dbReference type="PaxDb" id="9031-ENSGALP00000012145"/>
<dbReference type="GeneID" id="396509"/>
<dbReference type="KEGG" id="gga:396509"/>
<dbReference type="CTD" id="6749"/>
<dbReference type="VEuPathDB" id="HostDB:geneid_396509"/>
<dbReference type="eggNOG" id="KOG0526">
    <property type="taxonomic scope" value="Eukaryota"/>
</dbReference>
<dbReference type="InParanoid" id="Q04678"/>
<dbReference type="OrthoDB" id="498543at2759"/>
<dbReference type="PhylomeDB" id="Q04678"/>
<dbReference type="PRO" id="PR:Q04678"/>
<dbReference type="Proteomes" id="UP000000539">
    <property type="component" value="Unassembled WGS sequence"/>
</dbReference>
<dbReference type="GO" id="GO:0035101">
    <property type="term" value="C:FACT complex"/>
    <property type="evidence" value="ECO:0000318"/>
    <property type="project" value="GO_Central"/>
</dbReference>
<dbReference type="GO" id="GO:0005730">
    <property type="term" value="C:nucleolus"/>
    <property type="evidence" value="ECO:0007669"/>
    <property type="project" value="UniProtKB-SubCell"/>
</dbReference>
<dbReference type="GO" id="GO:0003677">
    <property type="term" value="F:DNA binding"/>
    <property type="evidence" value="ECO:0007669"/>
    <property type="project" value="UniProtKB-KW"/>
</dbReference>
<dbReference type="GO" id="GO:0042393">
    <property type="term" value="F:histone binding"/>
    <property type="evidence" value="ECO:0000318"/>
    <property type="project" value="GO_Central"/>
</dbReference>
<dbReference type="GO" id="GO:0031491">
    <property type="term" value="F:nucleosome binding"/>
    <property type="evidence" value="ECO:0000318"/>
    <property type="project" value="GO_Central"/>
</dbReference>
<dbReference type="GO" id="GO:0006281">
    <property type="term" value="P:DNA repair"/>
    <property type="evidence" value="ECO:0007669"/>
    <property type="project" value="UniProtKB-KW"/>
</dbReference>
<dbReference type="GO" id="GO:0006260">
    <property type="term" value="P:DNA replication"/>
    <property type="evidence" value="ECO:0007669"/>
    <property type="project" value="UniProtKB-KW"/>
</dbReference>
<dbReference type="GO" id="GO:1902275">
    <property type="term" value="P:regulation of chromatin organization"/>
    <property type="evidence" value="ECO:0000318"/>
    <property type="project" value="GO_Central"/>
</dbReference>
<dbReference type="CDD" id="cd21994">
    <property type="entry name" value="HMG-box_SSRP1-like"/>
    <property type="match status" value="1"/>
</dbReference>
<dbReference type="CDD" id="cd13230">
    <property type="entry name" value="PH1_SSRP1-like"/>
    <property type="match status" value="1"/>
</dbReference>
<dbReference type="CDD" id="cd13231">
    <property type="entry name" value="PH2_SSRP1-like"/>
    <property type="match status" value="1"/>
</dbReference>
<dbReference type="FunFam" id="1.10.30.10:FF:000072">
    <property type="entry name" value="FACT complex subunit SSRP1"/>
    <property type="match status" value="1"/>
</dbReference>
<dbReference type="FunFam" id="2.30.29.220:FF:000001">
    <property type="entry name" value="FACT complex subunit SSRP1"/>
    <property type="match status" value="1"/>
</dbReference>
<dbReference type="FunFam" id="2.30.29.30:FF:000119">
    <property type="entry name" value="FACT complex subunit SSRP1"/>
    <property type="match status" value="1"/>
</dbReference>
<dbReference type="FunFam" id="2.30.29.150:FF:000001">
    <property type="entry name" value="Fact complex subunit ssrp1"/>
    <property type="match status" value="1"/>
</dbReference>
<dbReference type="FunFam" id="2.30.29.30:FF:000098">
    <property type="entry name" value="Fact complex subunit ssrp1"/>
    <property type="match status" value="1"/>
</dbReference>
<dbReference type="Gene3D" id="2.30.29.150">
    <property type="match status" value="1"/>
</dbReference>
<dbReference type="Gene3D" id="1.10.30.10">
    <property type="entry name" value="High mobility group box domain"/>
    <property type="match status" value="1"/>
</dbReference>
<dbReference type="Gene3D" id="2.30.29.30">
    <property type="entry name" value="Pleckstrin-homology domain (PH domain)/Phosphotyrosine-binding domain (PTB)"/>
    <property type="match status" value="2"/>
</dbReference>
<dbReference type="Gene3D" id="2.30.29.220">
    <property type="entry name" value="Structure-specific recognition protein (SSRP1)"/>
    <property type="match status" value="1"/>
</dbReference>
<dbReference type="InterPro" id="IPR009071">
    <property type="entry name" value="HMG_box_dom"/>
</dbReference>
<dbReference type="InterPro" id="IPR036910">
    <property type="entry name" value="HMG_box_dom_sf"/>
</dbReference>
<dbReference type="InterPro" id="IPR011993">
    <property type="entry name" value="PH-like_dom_sf"/>
</dbReference>
<dbReference type="InterPro" id="IPR013719">
    <property type="entry name" value="RTT106/SPT16-like_middle_dom"/>
</dbReference>
<dbReference type="InterPro" id="IPR050454">
    <property type="entry name" value="RTT106/SSRP1_HistChap/FACT"/>
</dbReference>
<dbReference type="InterPro" id="IPR048993">
    <property type="entry name" value="SSRP1-like_PH1"/>
</dbReference>
<dbReference type="InterPro" id="IPR000969">
    <property type="entry name" value="SSRP1/POB3"/>
</dbReference>
<dbReference type="InterPro" id="IPR035417">
    <property type="entry name" value="SSRP1/POB3_N"/>
</dbReference>
<dbReference type="InterPro" id="IPR048985">
    <property type="entry name" value="SSRP1_C"/>
</dbReference>
<dbReference type="InterPro" id="IPR024954">
    <property type="entry name" value="SSRP1_DD"/>
</dbReference>
<dbReference type="InterPro" id="IPR038167">
    <property type="entry name" value="SSRP1_sf"/>
</dbReference>
<dbReference type="PANTHER" id="PTHR45849">
    <property type="entry name" value="FACT COMPLEX SUBUNIT SSRP1"/>
    <property type="match status" value="1"/>
</dbReference>
<dbReference type="PANTHER" id="PTHR45849:SF1">
    <property type="entry name" value="FACT COMPLEX SUBUNIT SSRP1"/>
    <property type="match status" value="1"/>
</dbReference>
<dbReference type="Pfam" id="PF00505">
    <property type="entry name" value="HMG_box"/>
    <property type="match status" value="1"/>
</dbReference>
<dbReference type="Pfam" id="PF21103">
    <property type="entry name" value="PH1_SSRP1-like"/>
    <property type="match status" value="1"/>
</dbReference>
<dbReference type="Pfam" id="PF17292">
    <property type="entry name" value="POB3_N"/>
    <property type="match status" value="1"/>
</dbReference>
<dbReference type="Pfam" id="PF08512">
    <property type="entry name" value="Rttp106-like_middle"/>
    <property type="match status" value="1"/>
</dbReference>
<dbReference type="Pfam" id="PF03531">
    <property type="entry name" value="SSrecog"/>
    <property type="match status" value="1"/>
</dbReference>
<dbReference type="Pfam" id="PF21092">
    <property type="entry name" value="SSRP1_C"/>
    <property type="match status" value="1"/>
</dbReference>
<dbReference type="PRINTS" id="PR00887">
    <property type="entry name" value="SSRCOGNITION"/>
</dbReference>
<dbReference type="SMART" id="SM00398">
    <property type="entry name" value="HMG"/>
    <property type="match status" value="1"/>
</dbReference>
<dbReference type="SMART" id="SM01287">
    <property type="entry name" value="Rtt106"/>
    <property type="match status" value="1"/>
</dbReference>
<dbReference type="SUPFAM" id="SSF47095">
    <property type="entry name" value="HMG-box"/>
    <property type="match status" value="1"/>
</dbReference>
<dbReference type="SUPFAM" id="SSF50729">
    <property type="entry name" value="PH domain-like"/>
    <property type="match status" value="1"/>
</dbReference>
<dbReference type="PROSITE" id="PS50118">
    <property type="entry name" value="HMG_BOX_2"/>
    <property type="match status" value="1"/>
</dbReference>